<protein>
    <recommendedName>
        <fullName evidence="1">Small ribosomal subunit protein uS5</fullName>
    </recommendedName>
    <alternativeName>
        <fullName evidence="3">30S ribosomal protein S5</fullName>
    </alternativeName>
</protein>
<comment type="function">
    <text evidence="1">With S4 and S12 plays an important role in translational accuracy.</text>
</comment>
<comment type="function">
    <text evidence="1">Located at the back of the 30S subunit body where it stabilizes the conformation of the head with respect to the body.</text>
</comment>
<comment type="subunit">
    <text evidence="1">Part of the 30S ribosomal subunit. Contacts proteins S4 and S8.</text>
</comment>
<comment type="domain">
    <text>The N-terminal domain interacts with the head of the 30S subunit; the C-terminal domain interacts with the body and contacts protein S4. The interaction surface between S4 and S5 is involved in control of translational fidelity.</text>
</comment>
<comment type="similarity">
    <text evidence="1">Belongs to the universal ribosomal protein uS5 family.</text>
</comment>
<reference key="1">
    <citation type="journal article" date="2008" name="PLoS ONE">
        <title>Genetic basis of virulence attenuation revealed by comparative genomic analysis of Mycobacterium tuberculosis strain H37Ra versus H37Rv.</title>
        <authorList>
            <person name="Zheng H."/>
            <person name="Lu L."/>
            <person name="Wang B."/>
            <person name="Pu S."/>
            <person name="Zhang X."/>
            <person name="Zhu G."/>
            <person name="Shi W."/>
            <person name="Zhang L."/>
            <person name="Wang H."/>
            <person name="Wang S."/>
            <person name="Zhao G."/>
            <person name="Zhang Y."/>
        </authorList>
    </citation>
    <scope>NUCLEOTIDE SEQUENCE [LARGE SCALE GENOMIC DNA]</scope>
    <source>
        <strain>ATCC 25177 / H37Ra</strain>
    </source>
</reference>
<accession>A5U0A7</accession>
<proteinExistence type="inferred from homology"/>
<organism>
    <name type="scientific">Mycobacterium tuberculosis (strain ATCC 25177 / H37Ra)</name>
    <dbReference type="NCBI Taxonomy" id="419947"/>
    <lineage>
        <taxon>Bacteria</taxon>
        <taxon>Bacillati</taxon>
        <taxon>Actinomycetota</taxon>
        <taxon>Actinomycetes</taxon>
        <taxon>Mycobacteriales</taxon>
        <taxon>Mycobacteriaceae</taxon>
        <taxon>Mycobacterium</taxon>
        <taxon>Mycobacterium tuberculosis complex</taxon>
    </lineage>
</organism>
<gene>
    <name evidence="1" type="primary">rpsE</name>
    <name type="ordered locus">MRA_0729</name>
</gene>
<dbReference type="EMBL" id="CP000611">
    <property type="protein sequence ID" value="ABQ72457.1"/>
    <property type="molecule type" value="Genomic_DNA"/>
</dbReference>
<dbReference type="RefSeq" id="WP_003403680.1">
    <property type="nucleotide sequence ID" value="NZ_CP016972.1"/>
</dbReference>
<dbReference type="SMR" id="A5U0A7"/>
<dbReference type="GeneID" id="45424686"/>
<dbReference type="KEGG" id="mra:MRA_0729"/>
<dbReference type="eggNOG" id="COG0098">
    <property type="taxonomic scope" value="Bacteria"/>
</dbReference>
<dbReference type="HOGENOM" id="CLU_065898_1_1_11"/>
<dbReference type="Proteomes" id="UP000001988">
    <property type="component" value="Chromosome"/>
</dbReference>
<dbReference type="GO" id="GO:0015935">
    <property type="term" value="C:small ribosomal subunit"/>
    <property type="evidence" value="ECO:0007669"/>
    <property type="project" value="InterPro"/>
</dbReference>
<dbReference type="GO" id="GO:0019843">
    <property type="term" value="F:rRNA binding"/>
    <property type="evidence" value="ECO:0007669"/>
    <property type="project" value="UniProtKB-UniRule"/>
</dbReference>
<dbReference type="GO" id="GO:0003735">
    <property type="term" value="F:structural constituent of ribosome"/>
    <property type="evidence" value="ECO:0007669"/>
    <property type="project" value="InterPro"/>
</dbReference>
<dbReference type="GO" id="GO:0006412">
    <property type="term" value="P:translation"/>
    <property type="evidence" value="ECO:0007669"/>
    <property type="project" value="UniProtKB-UniRule"/>
</dbReference>
<dbReference type="FunFam" id="3.30.160.20:FF:000001">
    <property type="entry name" value="30S ribosomal protein S5"/>
    <property type="match status" value="1"/>
</dbReference>
<dbReference type="FunFam" id="3.30.230.10:FF:000002">
    <property type="entry name" value="30S ribosomal protein S5"/>
    <property type="match status" value="1"/>
</dbReference>
<dbReference type="Gene3D" id="3.30.160.20">
    <property type="match status" value="1"/>
</dbReference>
<dbReference type="Gene3D" id="3.30.230.10">
    <property type="match status" value="1"/>
</dbReference>
<dbReference type="HAMAP" id="MF_01307_B">
    <property type="entry name" value="Ribosomal_uS5_B"/>
    <property type="match status" value="1"/>
</dbReference>
<dbReference type="InterPro" id="IPR020568">
    <property type="entry name" value="Ribosomal_Su5_D2-typ_SF"/>
</dbReference>
<dbReference type="InterPro" id="IPR000851">
    <property type="entry name" value="Ribosomal_uS5"/>
</dbReference>
<dbReference type="InterPro" id="IPR005712">
    <property type="entry name" value="Ribosomal_uS5_bac-type"/>
</dbReference>
<dbReference type="InterPro" id="IPR005324">
    <property type="entry name" value="Ribosomal_uS5_C"/>
</dbReference>
<dbReference type="InterPro" id="IPR013810">
    <property type="entry name" value="Ribosomal_uS5_N"/>
</dbReference>
<dbReference type="InterPro" id="IPR018192">
    <property type="entry name" value="Ribosomal_uS5_N_CS"/>
</dbReference>
<dbReference type="InterPro" id="IPR014721">
    <property type="entry name" value="Ribsml_uS5_D2-typ_fold_subgr"/>
</dbReference>
<dbReference type="NCBIfam" id="TIGR01021">
    <property type="entry name" value="rpsE_bact"/>
    <property type="match status" value="1"/>
</dbReference>
<dbReference type="PANTHER" id="PTHR48277">
    <property type="entry name" value="MITOCHONDRIAL RIBOSOMAL PROTEIN S5"/>
    <property type="match status" value="1"/>
</dbReference>
<dbReference type="PANTHER" id="PTHR48277:SF1">
    <property type="entry name" value="MITOCHONDRIAL RIBOSOMAL PROTEIN S5"/>
    <property type="match status" value="1"/>
</dbReference>
<dbReference type="Pfam" id="PF00333">
    <property type="entry name" value="Ribosomal_S5"/>
    <property type="match status" value="1"/>
</dbReference>
<dbReference type="Pfam" id="PF03719">
    <property type="entry name" value="Ribosomal_S5_C"/>
    <property type="match status" value="1"/>
</dbReference>
<dbReference type="SUPFAM" id="SSF54768">
    <property type="entry name" value="dsRNA-binding domain-like"/>
    <property type="match status" value="1"/>
</dbReference>
<dbReference type="SUPFAM" id="SSF54211">
    <property type="entry name" value="Ribosomal protein S5 domain 2-like"/>
    <property type="match status" value="1"/>
</dbReference>
<dbReference type="PROSITE" id="PS00585">
    <property type="entry name" value="RIBOSOMAL_S5"/>
    <property type="match status" value="1"/>
</dbReference>
<dbReference type="PROSITE" id="PS50881">
    <property type="entry name" value="S5_DSRBD"/>
    <property type="match status" value="1"/>
</dbReference>
<feature type="chain" id="PRO_1000086030" description="Small ribosomal subunit protein uS5">
    <location>
        <begin position="1"/>
        <end position="220"/>
    </location>
</feature>
<feature type="domain" description="S5 DRBM" evidence="1">
    <location>
        <begin position="42"/>
        <end position="105"/>
    </location>
</feature>
<feature type="region of interest" description="Disordered" evidence="2">
    <location>
        <begin position="1"/>
        <end position="39"/>
    </location>
</feature>
<feature type="compositionally biased region" description="Basic and acidic residues" evidence="2">
    <location>
        <begin position="13"/>
        <end position="39"/>
    </location>
</feature>
<keyword id="KW-1185">Reference proteome</keyword>
<keyword id="KW-0687">Ribonucleoprotein</keyword>
<keyword id="KW-0689">Ribosomal protein</keyword>
<keyword id="KW-0694">RNA-binding</keyword>
<keyword id="KW-0699">rRNA-binding</keyword>
<sequence>MAEQPAGQAGTTDNRDARGDREGRRRDSGRGSRERDGEKSNYLERVVAINRVSKVVKGGRRFSFTALVIVGDGNGMVGVGYGKAKEVPAAIAKGVEEARKSFFRVPLIGGTITHPVQGEAAAGVVLLRPASPGTGVIAGGAARAVLECAGVHDILAKSLGSDNAINVVHATVAALKLLQRPEEVAARRGLPIEDVAPAGMLKARRKSEALAASVLPDRTI</sequence>
<name>RS5_MYCTA</name>
<evidence type="ECO:0000255" key="1">
    <source>
        <dbReference type="HAMAP-Rule" id="MF_01307"/>
    </source>
</evidence>
<evidence type="ECO:0000256" key="2">
    <source>
        <dbReference type="SAM" id="MobiDB-lite"/>
    </source>
</evidence>
<evidence type="ECO:0000305" key="3"/>